<comment type="function">
    <text evidence="1">One of the extrinsic, lumenal subunits of photosystem II (PSII). PSII is a light-driven water plastoquinone oxidoreductase, using light energy to abstract electrons from H(2)O, generating a proton gradient subsequently used for ATP formation. The extrinsic proteins stabilize the structure of photosystem II oxygen-evolving complex (OEC), the ion environment of oxygen evolution and protect the OEC against heat-induced inactivation. Low-potential cytochrome c that plays a role in the OEC of PSII.</text>
</comment>
<comment type="cofactor">
    <cofactor evidence="1">
        <name>heme c</name>
        <dbReference type="ChEBI" id="CHEBI:61717"/>
    </cofactor>
    <text evidence="1">Binds 1 heme c group covalently per subunit.</text>
</comment>
<comment type="subunit">
    <text evidence="1">PSII is composed of 1 copy each of membrane proteins PsbA, PsbB, PsbC, PsbD, PsbE, PsbF, PsbH, PsbI, PsbJ, PsbK, PsbL, PsbM, PsbT, PsbX, PsbY, PsbZ, Psb30/Ycf12, peripheral proteins PsbO, CyanoQ (PsbQ), PsbU, PsbV and a large number of cofactors. It forms dimeric complexes.</text>
</comment>
<comment type="subcellular location">
    <subcellularLocation>
        <location evidence="1">Cellular thylakoid membrane</location>
        <topology evidence="1">Peripheral membrane protein</topology>
        <orientation evidence="1">Lumenal side</orientation>
    </subcellularLocation>
    <text evidence="1">Associated with photosystem II at the lumenal side of the thylakoid membrane.</text>
</comment>
<comment type="similarity">
    <text evidence="1">Belongs to the cytochrome c family. PsbV subfamily.</text>
</comment>
<feature type="signal peptide" evidence="1">
    <location>
        <begin position="1"/>
        <end position="26"/>
    </location>
</feature>
<feature type="chain" id="PRO_0000295596" description="Photosystem II extrinsic protein V">
    <location>
        <begin position="27"/>
        <end position="163"/>
    </location>
</feature>
<feature type="binding site" description="covalent" evidence="1">
    <location>
        <position position="63"/>
    </location>
    <ligand>
        <name>heme c</name>
        <dbReference type="ChEBI" id="CHEBI:61717"/>
    </ligand>
</feature>
<feature type="binding site" description="covalent" evidence="1">
    <location>
        <position position="66"/>
    </location>
    <ligand>
        <name>heme c</name>
        <dbReference type="ChEBI" id="CHEBI:61717"/>
    </ligand>
</feature>
<feature type="binding site" description="axial binding residue" evidence="1">
    <location>
        <position position="67"/>
    </location>
    <ligand>
        <name>heme c</name>
        <dbReference type="ChEBI" id="CHEBI:61717"/>
    </ligand>
    <ligandPart>
        <name>Fe</name>
        <dbReference type="ChEBI" id="CHEBI:18248"/>
    </ligandPart>
</feature>
<feature type="binding site" description="axial binding residue" evidence="1">
    <location>
        <position position="118"/>
    </location>
    <ligand>
        <name>heme c</name>
        <dbReference type="ChEBI" id="CHEBI:61717"/>
    </ligand>
    <ligandPart>
        <name>Fe</name>
        <dbReference type="ChEBI" id="CHEBI:18248"/>
    </ligandPart>
</feature>
<name>CY550_APHHA</name>
<keyword id="KW-0249">Electron transport</keyword>
<keyword id="KW-0349">Heme</keyword>
<keyword id="KW-0408">Iron</keyword>
<keyword id="KW-0472">Membrane</keyword>
<keyword id="KW-0479">Metal-binding</keyword>
<keyword id="KW-0602">Photosynthesis</keyword>
<keyword id="KW-0604">Photosystem II</keyword>
<keyword id="KW-0732">Signal</keyword>
<keyword id="KW-0793">Thylakoid</keyword>
<keyword id="KW-0813">Transport</keyword>
<organism>
    <name type="scientific">Aphanothece halophytica</name>
    <dbReference type="NCBI Taxonomy" id="72020"/>
    <lineage>
        <taxon>Bacteria</taxon>
        <taxon>Bacillati</taxon>
        <taxon>Cyanobacteriota</taxon>
        <taxon>Cyanophyceae</taxon>
        <taxon>Oscillatoriophycideae</taxon>
        <taxon>Chroococcales</taxon>
        <taxon>Aphanothecaceae</taxon>
        <taxon>Aphanothece</taxon>
    </lineage>
</organism>
<reference key="1">
    <citation type="journal article" date="2001" name="J. Biol. Chem.">
        <title>Halotolerant cyanobacterium Aphanothece halophytica contains an Na(+)/H(+) antiporter, homologous to eukaryotic ones, with novel ion specificity affected by C-terminal tail.</title>
        <authorList>
            <person name="Waditee R."/>
            <person name="Hibino T."/>
            <person name="Tanaka Y."/>
            <person name="Nakamura T."/>
            <person name="Incharoensakdi A."/>
            <person name="Takabe T."/>
        </authorList>
    </citation>
    <scope>NUCLEOTIDE SEQUENCE [GENOMIC DNA]</scope>
</reference>
<proteinExistence type="inferred from homology"/>
<sequence>MLRKLILITVATVFFACQLLVNPVSALELDEESRTVQYNEQGDEVVISIKEAERGKRLFNDTCAQCHLGGVTKTNPNVGLSLEALERAEPPRDNIAGLIDYMKNPTTYDGEIDIKEIHPNTVRSDILPERRNLTDDDLEAIAAHILSQPKSPRKQWGDGKVYN</sequence>
<accession>Q93HU5</accession>
<dbReference type="EMBL" id="AB059562">
    <property type="protein sequence ID" value="BAB69458.1"/>
    <property type="molecule type" value="Genomic_DNA"/>
</dbReference>
<dbReference type="SMR" id="Q93HU5"/>
<dbReference type="GO" id="GO:0009523">
    <property type="term" value="C:photosystem II"/>
    <property type="evidence" value="ECO:0007669"/>
    <property type="project" value="UniProtKB-KW"/>
</dbReference>
<dbReference type="GO" id="GO:0031676">
    <property type="term" value="C:plasma membrane-derived thylakoid membrane"/>
    <property type="evidence" value="ECO:0007669"/>
    <property type="project" value="UniProtKB-SubCell"/>
</dbReference>
<dbReference type="GO" id="GO:0009055">
    <property type="term" value="F:electron transfer activity"/>
    <property type="evidence" value="ECO:0007669"/>
    <property type="project" value="InterPro"/>
</dbReference>
<dbReference type="GO" id="GO:0020037">
    <property type="term" value="F:heme binding"/>
    <property type="evidence" value="ECO:0007669"/>
    <property type="project" value="InterPro"/>
</dbReference>
<dbReference type="GO" id="GO:0005506">
    <property type="term" value="F:iron ion binding"/>
    <property type="evidence" value="ECO:0007669"/>
    <property type="project" value="InterPro"/>
</dbReference>
<dbReference type="GO" id="GO:0019684">
    <property type="term" value="P:photosynthesis, light reaction"/>
    <property type="evidence" value="ECO:0007669"/>
    <property type="project" value="UniProtKB-UniRule"/>
</dbReference>
<dbReference type="GO" id="GO:0022904">
    <property type="term" value="P:respiratory electron transport chain"/>
    <property type="evidence" value="ECO:0007669"/>
    <property type="project" value="InterPro"/>
</dbReference>
<dbReference type="Gene3D" id="1.10.760.10">
    <property type="entry name" value="Cytochrome c-like domain"/>
    <property type="match status" value="1"/>
</dbReference>
<dbReference type="HAMAP" id="MF_01378">
    <property type="entry name" value="PSII_Cyt550"/>
    <property type="match status" value="1"/>
</dbReference>
<dbReference type="InterPro" id="IPR009056">
    <property type="entry name" value="Cyt_c-like_dom"/>
</dbReference>
<dbReference type="InterPro" id="IPR036909">
    <property type="entry name" value="Cyt_c-like_dom_sf"/>
</dbReference>
<dbReference type="InterPro" id="IPR029490">
    <property type="entry name" value="Cytochrom_C550"/>
</dbReference>
<dbReference type="InterPro" id="IPR017851">
    <property type="entry name" value="PsbV_cyt_c550"/>
</dbReference>
<dbReference type="InterPro" id="IPR016003">
    <property type="entry name" value="PsbV_cyt_c550-like"/>
</dbReference>
<dbReference type="NCBIfam" id="TIGR03045">
    <property type="entry name" value="PS_II_C550"/>
    <property type="match status" value="1"/>
</dbReference>
<dbReference type="Pfam" id="PF14495">
    <property type="entry name" value="Cytochrom_C550"/>
    <property type="match status" value="1"/>
</dbReference>
<dbReference type="PIRSF" id="PIRSF005890">
    <property type="entry name" value="Phot_II_cyt_c550"/>
    <property type="match status" value="1"/>
</dbReference>
<dbReference type="SUPFAM" id="SSF46626">
    <property type="entry name" value="Cytochrome c"/>
    <property type="match status" value="1"/>
</dbReference>
<dbReference type="PROSITE" id="PS51007">
    <property type="entry name" value="CYTC"/>
    <property type="match status" value="1"/>
</dbReference>
<evidence type="ECO:0000255" key="1">
    <source>
        <dbReference type="HAMAP-Rule" id="MF_01378"/>
    </source>
</evidence>
<gene>
    <name evidence="1" type="primary">psbV</name>
</gene>
<protein>
    <recommendedName>
        <fullName evidence="1">Photosystem II extrinsic protein V</fullName>
        <shortName evidence="1">PsbV</shortName>
    </recommendedName>
    <alternativeName>
        <fullName evidence="1">Cytochrome c-550</fullName>
    </alternativeName>
    <alternativeName>
        <fullName evidence="1">Cytochrome c550</fullName>
    </alternativeName>
    <alternativeName>
        <fullName evidence="1">Low-potential cytochrome c</fullName>
    </alternativeName>
</protein>